<comment type="function">
    <text evidence="1">Catalyzes the phosphorylation of the 3'-hydroxyl group of dephosphocoenzyme A to form coenzyme A.</text>
</comment>
<comment type="catalytic activity">
    <reaction evidence="1">
        <text>3'-dephospho-CoA + ATP = ADP + CoA + H(+)</text>
        <dbReference type="Rhea" id="RHEA:18245"/>
        <dbReference type="ChEBI" id="CHEBI:15378"/>
        <dbReference type="ChEBI" id="CHEBI:30616"/>
        <dbReference type="ChEBI" id="CHEBI:57287"/>
        <dbReference type="ChEBI" id="CHEBI:57328"/>
        <dbReference type="ChEBI" id="CHEBI:456216"/>
        <dbReference type="EC" id="2.7.1.24"/>
    </reaction>
</comment>
<comment type="pathway">
    <text evidence="1">Cofactor biosynthesis; coenzyme A biosynthesis; CoA from (R)-pantothenate: step 5/5.</text>
</comment>
<comment type="subcellular location">
    <subcellularLocation>
        <location evidence="1">Cytoplasm</location>
    </subcellularLocation>
</comment>
<comment type="similarity">
    <text evidence="1">Belongs to the CoaE family.</text>
</comment>
<protein>
    <recommendedName>
        <fullName evidence="1">Dephospho-CoA kinase</fullName>
        <ecNumber evidence="1">2.7.1.24</ecNumber>
    </recommendedName>
    <alternativeName>
        <fullName evidence="1">Dephosphocoenzyme A kinase</fullName>
    </alternativeName>
</protein>
<reference key="1">
    <citation type="journal article" date="2000" name="DNA Res.">
        <title>Complete genome structure of the nitrogen-fixing symbiotic bacterium Mesorhizobium loti.</title>
        <authorList>
            <person name="Kaneko T."/>
            <person name="Nakamura Y."/>
            <person name="Sato S."/>
            <person name="Asamizu E."/>
            <person name="Kato T."/>
            <person name="Sasamoto S."/>
            <person name="Watanabe A."/>
            <person name="Idesawa K."/>
            <person name="Ishikawa A."/>
            <person name="Kawashima K."/>
            <person name="Kimura T."/>
            <person name="Kishida Y."/>
            <person name="Kiyokawa C."/>
            <person name="Kohara M."/>
            <person name="Matsumoto M."/>
            <person name="Matsuno A."/>
            <person name="Mochizuki Y."/>
            <person name="Nakayama S."/>
            <person name="Nakazaki N."/>
            <person name="Shimpo S."/>
            <person name="Sugimoto M."/>
            <person name="Takeuchi C."/>
            <person name="Yamada M."/>
            <person name="Tabata S."/>
        </authorList>
    </citation>
    <scope>NUCLEOTIDE SEQUENCE [LARGE SCALE GENOMIC DNA]</scope>
    <source>
        <strain>LMG 29417 / CECT 9101 / MAFF 303099</strain>
    </source>
</reference>
<sequence>MIVLGLTGSIGLGKSTTAKMFAEAGVPVHDSDEAVHRLYSGVAAPLVEAAFPGTVVDGVVDRAKLGARVLGDAAALKRLEAIIHPLVRADADAFLARHRTAGESIAVLDIPLLFETGGRGRVDKVVVVTAPAEVQRQRVLARPGMTEEKLAAILAKQVPDEEKRRLADFIIDTGQGLEAARAEVDAIIDELRGQRGS</sequence>
<name>COAE_RHILO</name>
<dbReference type="EC" id="2.7.1.24" evidence="1"/>
<dbReference type="EMBL" id="BA000012">
    <property type="protein sequence ID" value="BAB51138.1"/>
    <property type="molecule type" value="Genomic_DNA"/>
</dbReference>
<dbReference type="RefSeq" id="WP_010912480.1">
    <property type="nucleotide sequence ID" value="NC_002678.2"/>
</dbReference>
<dbReference type="SMR" id="Q98DY2"/>
<dbReference type="KEGG" id="mlo:mlr4493"/>
<dbReference type="PATRIC" id="fig|266835.9.peg.3551"/>
<dbReference type="eggNOG" id="COG0237">
    <property type="taxonomic scope" value="Bacteria"/>
</dbReference>
<dbReference type="HOGENOM" id="CLU_057180_3_0_5"/>
<dbReference type="UniPathway" id="UPA00241">
    <property type="reaction ID" value="UER00356"/>
</dbReference>
<dbReference type="Proteomes" id="UP000000552">
    <property type="component" value="Chromosome"/>
</dbReference>
<dbReference type="GO" id="GO:0005737">
    <property type="term" value="C:cytoplasm"/>
    <property type="evidence" value="ECO:0007669"/>
    <property type="project" value="UniProtKB-SubCell"/>
</dbReference>
<dbReference type="GO" id="GO:0005524">
    <property type="term" value="F:ATP binding"/>
    <property type="evidence" value="ECO:0007669"/>
    <property type="project" value="UniProtKB-UniRule"/>
</dbReference>
<dbReference type="GO" id="GO:0004140">
    <property type="term" value="F:dephospho-CoA kinase activity"/>
    <property type="evidence" value="ECO:0007669"/>
    <property type="project" value="UniProtKB-UniRule"/>
</dbReference>
<dbReference type="GO" id="GO:0015937">
    <property type="term" value="P:coenzyme A biosynthetic process"/>
    <property type="evidence" value="ECO:0007669"/>
    <property type="project" value="UniProtKB-UniRule"/>
</dbReference>
<dbReference type="CDD" id="cd02022">
    <property type="entry name" value="DPCK"/>
    <property type="match status" value="1"/>
</dbReference>
<dbReference type="Gene3D" id="3.40.50.300">
    <property type="entry name" value="P-loop containing nucleotide triphosphate hydrolases"/>
    <property type="match status" value="1"/>
</dbReference>
<dbReference type="HAMAP" id="MF_00376">
    <property type="entry name" value="Dephospho_CoA_kinase"/>
    <property type="match status" value="1"/>
</dbReference>
<dbReference type="InterPro" id="IPR001977">
    <property type="entry name" value="Depp_CoAkinase"/>
</dbReference>
<dbReference type="InterPro" id="IPR027417">
    <property type="entry name" value="P-loop_NTPase"/>
</dbReference>
<dbReference type="NCBIfam" id="TIGR00152">
    <property type="entry name" value="dephospho-CoA kinase"/>
    <property type="match status" value="1"/>
</dbReference>
<dbReference type="PANTHER" id="PTHR10695:SF46">
    <property type="entry name" value="BIFUNCTIONAL COENZYME A SYNTHASE-RELATED"/>
    <property type="match status" value="1"/>
</dbReference>
<dbReference type="PANTHER" id="PTHR10695">
    <property type="entry name" value="DEPHOSPHO-COA KINASE-RELATED"/>
    <property type="match status" value="1"/>
</dbReference>
<dbReference type="Pfam" id="PF01121">
    <property type="entry name" value="CoaE"/>
    <property type="match status" value="1"/>
</dbReference>
<dbReference type="SUPFAM" id="SSF52540">
    <property type="entry name" value="P-loop containing nucleoside triphosphate hydrolases"/>
    <property type="match status" value="1"/>
</dbReference>
<dbReference type="PROSITE" id="PS51219">
    <property type="entry name" value="DPCK"/>
    <property type="match status" value="1"/>
</dbReference>
<accession>Q98DY2</accession>
<proteinExistence type="inferred from homology"/>
<organism>
    <name type="scientific">Mesorhizobium japonicum (strain LMG 29417 / CECT 9101 / MAFF 303099)</name>
    <name type="common">Mesorhizobium loti (strain MAFF 303099)</name>
    <dbReference type="NCBI Taxonomy" id="266835"/>
    <lineage>
        <taxon>Bacteria</taxon>
        <taxon>Pseudomonadati</taxon>
        <taxon>Pseudomonadota</taxon>
        <taxon>Alphaproteobacteria</taxon>
        <taxon>Hyphomicrobiales</taxon>
        <taxon>Phyllobacteriaceae</taxon>
        <taxon>Mesorhizobium</taxon>
    </lineage>
</organism>
<keyword id="KW-0067">ATP-binding</keyword>
<keyword id="KW-0173">Coenzyme A biosynthesis</keyword>
<keyword id="KW-0963">Cytoplasm</keyword>
<keyword id="KW-0418">Kinase</keyword>
<keyword id="KW-0547">Nucleotide-binding</keyword>
<keyword id="KW-0808">Transferase</keyword>
<evidence type="ECO:0000255" key="1">
    <source>
        <dbReference type="HAMAP-Rule" id="MF_00376"/>
    </source>
</evidence>
<feature type="chain" id="PRO_0000172987" description="Dephospho-CoA kinase">
    <location>
        <begin position="1"/>
        <end position="197"/>
    </location>
</feature>
<feature type="domain" description="DPCK" evidence="1">
    <location>
        <begin position="3"/>
        <end position="197"/>
    </location>
</feature>
<feature type="binding site" evidence="1">
    <location>
        <begin position="11"/>
        <end position="16"/>
    </location>
    <ligand>
        <name>ATP</name>
        <dbReference type="ChEBI" id="CHEBI:30616"/>
    </ligand>
</feature>
<gene>
    <name evidence="1" type="primary">coaE</name>
    <name type="ordered locus">mlr4493</name>
</gene>